<organism>
    <name type="scientific">Escherichia coli O17:K52:H18 (strain UMN026 / ExPEC)</name>
    <dbReference type="NCBI Taxonomy" id="585056"/>
    <lineage>
        <taxon>Bacteria</taxon>
        <taxon>Pseudomonadati</taxon>
        <taxon>Pseudomonadota</taxon>
        <taxon>Gammaproteobacteria</taxon>
        <taxon>Enterobacterales</taxon>
        <taxon>Enterobacteriaceae</taxon>
        <taxon>Escherichia</taxon>
    </lineage>
</organism>
<keyword id="KW-0963">Cytoplasm</keyword>
<keyword id="KW-0342">GTP-binding</keyword>
<keyword id="KW-0378">Hydrolase</keyword>
<keyword id="KW-0460">Magnesium</keyword>
<keyword id="KW-0479">Metal-binding</keyword>
<keyword id="KW-0547">Nucleotide-binding</keyword>
<protein>
    <recommendedName>
        <fullName evidence="1">GTPase Obg</fullName>
        <ecNumber evidence="1">3.6.5.-</ecNumber>
    </recommendedName>
    <alternativeName>
        <fullName evidence="1">GTP-binding protein Obg</fullName>
    </alternativeName>
</protein>
<gene>
    <name evidence="1" type="primary">obg</name>
    <name type="ordered locus">ECUMN_3663</name>
</gene>
<accession>B7NDG7</accession>
<reference key="1">
    <citation type="journal article" date="2009" name="PLoS Genet.">
        <title>Organised genome dynamics in the Escherichia coli species results in highly diverse adaptive paths.</title>
        <authorList>
            <person name="Touchon M."/>
            <person name="Hoede C."/>
            <person name="Tenaillon O."/>
            <person name="Barbe V."/>
            <person name="Baeriswyl S."/>
            <person name="Bidet P."/>
            <person name="Bingen E."/>
            <person name="Bonacorsi S."/>
            <person name="Bouchier C."/>
            <person name="Bouvet O."/>
            <person name="Calteau A."/>
            <person name="Chiapello H."/>
            <person name="Clermont O."/>
            <person name="Cruveiller S."/>
            <person name="Danchin A."/>
            <person name="Diard M."/>
            <person name="Dossat C."/>
            <person name="Karoui M.E."/>
            <person name="Frapy E."/>
            <person name="Garry L."/>
            <person name="Ghigo J.M."/>
            <person name="Gilles A.M."/>
            <person name="Johnson J."/>
            <person name="Le Bouguenec C."/>
            <person name="Lescat M."/>
            <person name="Mangenot S."/>
            <person name="Martinez-Jehanne V."/>
            <person name="Matic I."/>
            <person name="Nassif X."/>
            <person name="Oztas S."/>
            <person name="Petit M.A."/>
            <person name="Pichon C."/>
            <person name="Rouy Z."/>
            <person name="Ruf C.S."/>
            <person name="Schneider D."/>
            <person name="Tourret J."/>
            <person name="Vacherie B."/>
            <person name="Vallenet D."/>
            <person name="Medigue C."/>
            <person name="Rocha E.P.C."/>
            <person name="Denamur E."/>
        </authorList>
    </citation>
    <scope>NUCLEOTIDE SEQUENCE [LARGE SCALE GENOMIC DNA]</scope>
    <source>
        <strain>UMN026 / ExPEC</strain>
    </source>
</reference>
<comment type="function">
    <text evidence="1">An essential GTPase which binds GTP, GDP and possibly (p)ppGpp with moderate affinity, with high nucleotide exchange rates and a fairly low GTP hydrolysis rate. Plays a role in control of the cell cycle, stress response, ribosome biogenesis and in those bacteria that undergo differentiation, in morphogenesis control.</text>
</comment>
<comment type="cofactor">
    <cofactor evidence="1">
        <name>Mg(2+)</name>
        <dbReference type="ChEBI" id="CHEBI:18420"/>
    </cofactor>
</comment>
<comment type="subunit">
    <text evidence="1">Monomer.</text>
</comment>
<comment type="subcellular location">
    <subcellularLocation>
        <location evidence="1">Cytoplasm</location>
    </subcellularLocation>
</comment>
<comment type="similarity">
    <text evidence="1">Belongs to the TRAFAC class OBG-HflX-like GTPase superfamily. OBG GTPase family.</text>
</comment>
<proteinExistence type="inferred from homology"/>
<feature type="chain" id="PRO_0000385920" description="GTPase Obg">
    <location>
        <begin position="1"/>
        <end position="390"/>
    </location>
</feature>
<feature type="domain" description="Obg" evidence="2">
    <location>
        <begin position="1"/>
        <end position="159"/>
    </location>
</feature>
<feature type="domain" description="OBG-type G" evidence="1">
    <location>
        <begin position="160"/>
        <end position="333"/>
    </location>
</feature>
<feature type="region of interest" description="Disordered" evidence="3">
    <location>
        <begin position="127"/>
        <end position="147"/>
    </location>
</feature>
<feature type="compositionally biased region" description="Polar residues" evidence="3">
    <location>
        <begin position="129"/>
        <end position="145"/>
    </location>
</feature>
<feature type="binding site" evidence="1">
    <location>
        <begin position="166"/>
        <end position="173"/>
    </location>
    <ligand>
        <name>GTP</name>
        <dbReference type="ChEBI" id="CHEBI:37565"/>
    </ligand>
</feature>
<feature type="binding site" evidence="1">
    <location>
        <position position="173"/>
    </location>
    <ligand>
        <name>Mg(2+)</name>
        <dbReference type="ChEBI" id="CHEBI:18420"/>
    </ligand>
</feature>
<feature type="binding site" evidence="1">
    <location>
        <begin position="191"/>
        <end position="195"/>
    </location>
    <ligand>
        <name>GTP</name>
        <dbReference type="ChEBI" id="CHEBI:37565"/>
    </ligand>
</feature>
<feature type="binding site" evidence="1">
    <location>
        <position position="193"/>
    </location>
    <ligand>
        <name>Mg(2+)</name>
        <dbReference type="ChEBI" id="CHEBI:18420"/>
    </ligand>
</feature>
<feature type="binding site" evidence="1">
    <location>
        <begin position="213"/>
        <end position="216"/>
    </location>
    <ligand>
        <name>GTP</name>
        <dbReference type="ChEBI" id="CHEBI:37565"/>
    </ligand>
</feature>
<feature type="binding site" evidence="1">
    <location>
        <begin position="283"/>
        <end position="286"/>
    </location>
    <ligand>
        <name>GTP</name>
        <dbReference type="ChEBI" id="CHEBI:37565"/>
    </ligand>
</feature>
<feature type="binding site" evidence="1">
    <location>
        <begin position="314"/>
        <end position="316"/>
    </location>
    <ligand>
        <name>GTP</name>
        <dbReference type="ChEBI" id="CHEBI:37565"/>
    </ligand>
</feature>
<name>OBG_ECOLU</name>
<evidence type="ECO:0000255" key="1">
    <source>
        <dbReference type="HAMAP-Rule" id="MF_01454"/>
    </source>
</evidence>
<evidence type="ECO:0000255" key="2">
    <source>
        <dbReference type="PROSITE-ProRule" id="PRU01231"/>
    </source>
</evidence>
<evidence type="ECO:0000256" key="3">
    <source>
        <dbReference type="SAM" id="MobiDB-lite"/>
    </source>
</evidence>
<dbReference type="EC" id="3.6.5.-" evidence="1"/>
<dbReference type="EMBL" id="CU928163">
    <property type="protein sequence ID" value="CAR14817.1"/>
    <property type="molecule type" value="Genomic_DNA"/>
</dbReference>
<dbReference type="RefSeq" id="YP_002414322.1">
    <property type="nucleotide sequence ID" value="NC_011751.1"/>
</dbReference>
<dbReference type="SMR" id="B7NDG7"/>
<dbReference type="STRING" id="585056.ECUMN_3663"/>
<dbReference type="KEGG" id="eum:ECUMN_3663"/>
<dbReference type="PATRIC" id="fig|585056.7.peg.3843"/>
<dbReference type="HOGENOM" id="CLU_011747_2_0_6"/>
<dbReference type="Proteomes" id="UP000007097">
    <property type="component" value="Chromosome"/>
</dbReference>
<dbReference type="GO" id="GO:0005737">
    <property type="term" value="C:cytoplasm"/>
    <property type="evidence" value="ECO:0007669"/>
    <property type="project" value="UniProtKB-SubCell"/>
</dbReference>
<dbReference type="GO" id="GO:0005525">
    <property type="term" value="F:GTP binding"/>
    <property type="evidence" value="ECO:0007669"/>
    <property type="project" value="UniProtKB-UniRule"/>
</dbReference>
<dbReference type="GO" id="GO:0003924">
    <property type="term" value="F:GTPase activity"/>
    <property type="evidence" value="ECO:0007669"/>
    <property type="project" value="UniProtKB-UniRule"/>
</dbReference>
<dbReference type="GO" id="GO:0000287">
    <property type="term" value="F:magnesium ion binding"/>
    <property type="evidence" value="ECO:0007669"/>
    <property type="project" value="InterPro"/>
</dbReference>
<dbReference type="GO" id="GO:0042254">
    <property type="term" value="P:ribosome biogenesis"/>
    <property type="evidence" value="ECO:0007669"/>
    <property type="project" value="UniProtKB-UniRule"/>
</dbReference>
<dbReference type="CDD" id="cd01898">
    <property type="entry name" value="Obg"/>
    <property type="match status" value="1"/>
</dbReference>
<dbReference type="FunFam" id="2.70.210.12:FF:000001">
    <property type="entry name" value="GTPase Obg"/>
    <property type="match status" value="1"/>
</dbReference>
<dbReference type="FunFam" id="3.40.50.300:FF:000185">
    <property type="entry name" value="GTPase Obg"/>
    <property type="match status" value="1"/>
</dbReference>
<dbReference type="Gene3D" id="2.70.210.12">
    <property type="entry name" value="GTP1/OBG domain"/>
    <property type="match status" value="1"/>
</dbReference>
<dbReference type="Gene3D" id="3.40.50.300">
    <property type="entry name" value="P-loop containing nucleotide triphosphate hydrolases"/>
    <property type="match status" value="1"/>
</dbReference>
<dbReference type="HAMAP" id="MF_01454">
    <property type="entry name" value="GTPase_Obg"/>
    <property type="match status" value="1"/>
</dbReference>
<dbReference type="InterPro" id="IPR031167">
    <property type="entry name" value="G_OBG"/>
</dbReference>
<dbReference type="InterPro" id="IPR006073">
    <property type="entry name" value="GTP-bd"/>
</dbReference>
<dbReference type="InterPro" id="IPR014100">
    <property type="entry name" value="GTP-bd_Obg/CgtA"/>
</dbReference>
<dbReference type="InterPro" id="IPR006074">
    <property type="entry name" value="GTP1-OBG_CS"/>
</dbReference>
<dbReference type="InterPro" id="IPR006169">
    <property type="entry name" value="GTP1_OBG_dom"/>
</dbReference>
<dbReference type="InterPro" id="IPR036726">
    <property type="entry name" value="GTP1_OBG_dom_sf"/>
</dbReference>
<dbReference type="InterPro" id="IPR045086">
    <property type="entry name" value="OBG_GTPase"/>
</dbReference>
<dbReference type="InterPro" id="IPR027417">
    <property type="entry name" value="P-loop_NTPase"/>
</dbReference>
<dbReference type="NCBIfam" id="TIGR02729">
    <property type="entry name" value="Obg_CgtA"/>
    <property type="match status" value="1"/>
</dbReference>
<dbReference type="NCBIfam" id="NF008955">
    <property type="entry name" value="PRK12297.1"/>
    <property type="match status" value="1"/>
</dbReference>
<dbReference type="NCBIfam" id="NF008956">
    <property type="entry name" value="PRK12299.1"/>
    <property type="match status" value="1"/>
</dbReference>
<dbReference type="PANTHER" id="PTHR11702">
    <property type="entry name" value="DEVELOPMENTALLY REGULATED GTP-BINDING PROTEIN-RELATED"/>
    <property type="match status" value="1"/>
</dbReference>
<dbReference type="PANTHER" id="PTHR11702:SF31">
    <property type="entry name" value="MITOCHONDRIAL RIBOSOME-ASSOCIATED GTPASE 2"/>
    <property type="match status" value="1"/>
</dbReference>
<dbReference type="Pfam" id="PF01018">
    <property type="entry name" value="GTP1_OBG"/>
    <property type="match status" value="1"/>
</dbReference>
<dbReference type="Pfam" id="PF01926">
    <property type="entry name" value="MMR_HSR1"/>
    <property type="match status" value="1"/>
</dbReference>
<dbReference type="PIRSF" id="PIRSF002401">
    <property type="entry name" value="GTP_bd_Obg/CgtA"/>
    <property type="match status" value="1"/>
</dbReference>
<dbReference type="PRINTS" id="PR00326">
    <property type="entry name" value="GTP1OBG"/>
</dbReference>
<dbReference type="SUPFAM" id="SSF82051">
    <property type="entry name" value="Obg GTP-binding protein N-terminal domain"/>
    <property type="match status" value="1"/>
</dbReference>
<dbReference type="SUPFAM" id="SSF52540">
    <property type="entry name" value="P-loop containing nucleoside triphosphate hydrolases"/>
    <property type="match status" value="1"/>
</dbReference>
<dbReference type="PROSITE" id="PS51710">
    <property type="entry name" value="G_OBG"/>
    <property type="match status" value="1"/>
</dbReference>
<dbReference type="PROSITE" id="PS00905">
    <property type="entry name" value="GTP1_OBG"/>
    <property type="match status" value="1"/>
</dbReference>
<dbReference type="PROSITE" id="PS51883">
    <property type="entry name" value="OBG"/>
    <property type="match status" value="1"/>
</dbReference>
<sequence length="390" mass="43228">MKFVDEASILVVAGDGGNGCVSFRREKYIPKGGPDGGDGGDGGDVWMEADENLNTLIDYRFEKSFRAERGQNGASRDCTGKRGKDVTIKVPVGTRVIDQGTGETMGDMTKHGQRLLVAKGGWHGLGNTRFKSSVNRTPRQKTNGTPGDKRELLLELMLLADVGMLGMPNAGKSTFIRAVSAAKPKVADYPFTTLVPSLGVVRMDNEKSFVVADIPGLIEGAAEGAGLGIRFLKHLERCRVLLHLIDIDPIDGTDPVENARIIISELEKYSQDLAAKPRWLVFNKIDLLDKAEAEEKAKAIAEALGWEDKYYLISAASGLGVKDLCWDVMTFIIENPVVQAEEAKQPEKVEFMWDDYHRQQLEEIAEEDDEDWDDDWDEDDEEGVEFIYKR</sequence>